<reference key="1">
    <citation type="journal article" date="2009" name="BMC Genomics">
        <title>Genome evolution driven by host adaptations results in a more virulent and antimicrobial-resistant Streptococcus pneumoniae serotype 14.</title>
        <authorList>
            <person name="Ding F."/>
            <person name="Tang P."/>
            <person name="Hsu M.-H."/>
            <person name="Cui P."/>
            <person name="Hu S."/>
            <person name="Yu J."/>
            <person name="Chiu C.-H."/>
        </authorList>
    </citation>
    <scope>NUCLEOTIDE SEQUENCE [LARGE SCALE GENOMIC DNA]</scope>
    <source>
        <strain>CGSP14</strain>
    </source>
</reference>
<comment type="function">
    <text evidence="1">Cell wall formation.</text>
</comment>
<comment type="catalytic activity">
    <reaction evidence="1">
        <text>UDP-N-acetyl-alpha-D-muramate + NADP(+) = UDP-N-acetyl-3-O-(1-carboxyvinyl)-alpha-D-glucosamine + NADPH + H(+)</text>
        <dbReference type="Rhea" id="RHEA:12248"/>
        <dbReference type="ChEBI" id="CHEBI:15378"/>
        <dbReference type="ChEBI" id="CHEBI:57783"/>
        <dbReference type="ChEBI" id="CHEBI:58349"/>
        <dbReference type="ChEBI" id="CHEBI:68483"/>
        <dbReference type="ChEBI" id="CHEBI:70757"/>
        <dbReference type="EC" id="1.3.1.98"/>
    </reaction>
</comment>
<comment type="cofactor">
    <cofactor evidence="1">
        <name>FAD</name>
        <dbReference type="ChEBI" id="CHEBI:57692"/>
    </cofactor>
</comment>
<comment type="pathway">
    <text evidence="1">Cell wall biogenesis; peptidoglycan biosynthesis.</text>
</comment>
<comment type="subcellular location">
    <subcellularLocation>
        <location evidence="1">Cytoplasm</location>
    </subcellularLocation>
</comment>
<comment type="similarity">
    <text evidence="1">Belongs to the MurB family.</text>
</comment>
<dbReference type="EC" id="1.3.1.98" evidence="1"/>
<dbReference type="EMBL" id="CP001033">
    <property type="protein sequence ID" value="ACB90630.1"/>
    <property type="molecule type" value="Genomic_DNA"/>
</dbReference>
<dbReference type="RefSeq" id="WP_000116186.1">
    <property type="nucleotide sequence ID" value="NC_010582.1"/>
</dbReference>
<dbReference type="SMR" id="B2IQK6"/>
<dbReference type="KEGG" id="spw:SPCG_1378"/>
<dbReference type="HOGENOM" id="CLU_035304_1_1_9"/>
<dbReference type="UniPathway" id="UPA00219"/>
<dbReference type="GO" id="GO:0005829">
    <property type="term" value="C:cytosol"/>
    <property type="evidence" value="ECO:0007669"/>
    <property type="project" value="TreeGrafter"/>
</dbReference>
<dbReference type="GO" id="GO:0071949">
    <property type="term" value="F:FAD binding"/>
    <property type="evidence" value="ECO:0007669"/>
    <property type="project" value="InterPro"/>
</dbReference>
<dbReference type="GO" id="GO:0008762">
    <property type="term" value="F:UDP-N-acetylmuramate dehydrogenase activity"/>
    <property type="evidence" value="ECO:0007669"/>
    <property type="project" value="UniProtKB-UniRule"/>
</dbReference>
<dbReference type="GO" id="GO:0051301">
    <property type="term" value="P:cell division"/>
    <property type="evidence" value="ECO:0007669"/>
    <property type="project" value="UniProtKB-KW"/>
</dbReference>
<dbReference type="GO" id="GO:0071555">
    <property type="term" value="P:cell wall organization"/>
    <property type="evidence" value="ECO:0007669"/>
    <property type="project" value="UniProtKB-KW"/>
</dbReference>
<dbReference type="GO" id="GO:0009252">
    <property type="term" value="P:peptidoglycan biosynthetic process"/>
    <property type="evidence" value="ECO:0007669"/>
    <property type="project" value="UniProtKB-UniRule"/>
</dbReference>
<dbReference type="GO" id="GO:0008360">
    <property type="term" value="P:regulation of cell shape"/>
    <property type="evidence" value="ECO:0007669"/>
    <property type="project" value="UniProtKB-KW"/>
</dbReference>
<dbReference type="Gene3D" id="3.30.465.10">
    <property type="match status" value="1"/>
</dbReference>
<dbReference type="Gene3D" id="3.90.78.10">
    <property type="entry name" value="UDP-N-acetylenolpyruvoylglucosamine reductase, C-terminal domain"/>
    <property type="match status" value="1"/>
</dbReference>
<dbReference type="Gene3D" id="3.30.43.10">
    <property type="entry name" value="Uridine Diphospho-n-acetylenolpyruvylglucosamine Reductase, domain 2"/>
    <property type="match status" value="1"/>
</dbReference>
<dbReference type="HAMAP" id="MF_00037">
    <property type="entry name" value="MurB"/>
    <property type="match status" value="1"/>
</dbReference>
<dbReference type="InterPro" id="IPR016166">
    <property type="entry name" value="FAD-bd_PCMH"/>
</dbReference>
<dbReference type="InterPro" id="IPR036318">
    <property type="entry name" value="FAD-bd_PCMH-like_sf"/>
</dbReference>
<dbReference type="InterPro" id="IPR016167">
    <property type="entry name" value="FAD-bd_PCMH_sub1"/>
</dbReference>
<dbReference type="InterPro" id="IPR016169">
    <property type="entry name" value="FAD-bd_PCMH_sub2"/>
</dbReference>
<dbReference type="InterPro" id="IPR003170">
    <property type="entry name" value="MurB"/>
</dbReference>
<dbReference type="InterPro" id="IPR011601">
    <property type="entry name" value="MurB_C"/>
</dbReference>
<dbReference type="InterPro" id="IPR036635">
    <property type="entry name" value="MurB_C_sf"/>
</dbReference>
<dbReference type="InterPro" id="IPR006094">
    <property type="entry name" value="Oxid_FAD_bind_N"/>
</dbReference>
<dbReference type="NCBIfam" id="TIGR00179">
    <property type="entry name" value="murB"/>
    <property type="match status" value="1"/>
</dbReference>
<dbReference type="NCBIfam" id="NF010480">
    <property type="entry name" value="PRK13905.1"/>
    <property type="match status" value="1"/>
</dbReference>
<dbReference type="PANTHER" id="PTHR21071">
    <property type="entry name" value="UDP-N-ACETYLENOLPYRUVOYLGLUCOSAMINE REDUCTASE"/>
    <property type="match status" value="1"/>
</dbReference>
<dbReference type="PANTHER" id="PTHR21071:SF4">
    <property type="entry name" value="UDP-N-ACETYLENOLPYRUVOYLGLUCOSAMINE REDUCTASE"/>
    <property type="match status" value="1"/>
</dbReference>
<dbReference type="Pfam" id="PF01565">
    <property type="entry name" value="FAD_binding_4"/>
    <property type="match status" value="1"/>
</dbReference>
<dbReference type="Pfam" id="PF02873">
    <property type="entry name" value="MurB_C"/>
    <property type="match status" value="1"/>
</dbReference>
<dbReference type="SUPFAM" id="SSF56176">
    <property type="entry name" value="FAD-binding/transporter-associated domain-like"/>
    <property type="match status" value="1"/>
</dbReference>
<dbReference type="SUPFAM" id="SSF56194">
    <property type="entry name" value="Uridine diphospho-N-Acetylenolpyruvylglucosamine reductase, MurB, C-terminal domain"/>
    <property type="match status" value="1"/>
</dbReference>
<dbReference type="PROSITE" id="PS51387">
    <property type="entry name" value="FAD_PCMH"/>
    <property type="match status" value="1"/>
</dbReference>
<name>MURB_STRPS</name>
<accession>B2IQK6</accession>
<sequence length="301" mass="33023">MSVREKMLEILEGIDIRFKEPLHSYSYTKVGGEPDYLVFPRNRCELARLKRFSNQEHIPWMVLGNASNIIVRDGGIRGFVILCDKLNNVSVDGYTIEAEAGANLIETTRIALRHSLTGFEFACGIPGSVGGAVFMNAGAYGGEIAHILQSCKVLTKDGEIETLSAKDLAFGYRHSAIQESGSVVLSAKFALAPGTHQVIKQEMDRLTHLRELKQPLEYPSCGSVFKRPVGHFAGQLISEAGLKGYRIGGVEVSEKHAGFMINVADGTAKDYEDLIESVIEKVKEHSGVTLEREVRILGESK</sequence>
<protein>
    <recommendedName>
        <fullName evidence="1">UDP-N-acetylenolpyruvoylglucosamine reductase</fullName>
        <ecNumber evidence="1">1.3.1.98</ecNumber>
    </recommendedName>
    <alternativeName>
        <fullName evidence="1">UDP-N-acetylmuramate dehydrogenase</fullName>
    </alternativeName>
</protein>
<proteinExistence type="inferred from homology"/>
<evidence type="ECO:0000255" key="1">
    <source>
        <dbReference type="HAMAP-Rule" id="MF_00037"/>
    </source>
</evidence>
<organism>
    <name type="scientific">Streptococcus pneumoniae (strain CGSP14)</name>
    <dbReference type="NCBI Taxonomy" id="516950"/>
    <lineage>
        <taxon>Bacteria</taxon>
        <taxon>Bacillati</taxon>
        <taxon>Bacillota</taxon>
        <taxon>Bacilli</taxon>
        <taxon>Lactobacillales</taxon>
        <taxon>Streptococcaceae</taxon>
        <taxon>Streptococcus</taxon>
    </lineage>
</organism>
<keyword id="KW-0131">Cell cycle</keyword>
<keyword id="KW-0132">Cell division</keyword>
<keyword id="KW-0133">Cell shape</keyword>
<keyword id="KW-0961">Cell wall biogenesis/degradation</keyword>
<keyword id="KW-0963">Cytoplasm</keyword>
<keyword id="KW-0274">FAD</keyword>
<keyword id="KW-0285">Flavoprotein</keyword>
<keyword id="KW-0521">NADP</keyword>
<keyword id="KW-0560">Oxidoreductase</keyword>
<keyword id="KW-0573">Peptidoglycan synthesis</keyword>
<feature type="chain" id="PRO_1000202056" description="UDP-N-acetylenolpyruvoylglucosamine reductase">
    <location>
        <begin position="1"/>
        <end position="301"/>
    </location>
</feature>
<feature type="domain" description="FAD-binding PCMH-type" evidence="1">
    <location>
        <begin position="30"/>
        <end position="194"/>
    </location>
</feature>
<feature type="active site" evidence="1">
    <location>
        <position position="173"/>
    </location>
</feature>
<feature type="active site" description="Proton donor" evidence="1">
    <location>
        <position position="223"/>
    </location>
</feature>
<feature type="active site" evidence="1">
    <location>
        <position position="293"/>
    </location>
</feature>
<gene>
    <name evidence="1" type="primary">murB</name>
    <name type="ordered locus">SPCG_1378</name>
</gene>